<dbReference type="EC" id="7.1.2.2" evidence="1"/>
<dbReference type="EMBL" id="AY044462">
    <property type="protein sequence ID" value="AAK95911.1"/>
    <property type="molecule type" value="Genomic_DNA"/>
</dbReference>
<dbReference type="SMR" id="Q7HDI4"/>
<dbReference type="GO" id="GO:0009535">
    <property type="term" value="C:chloroplast thylakoid membrane"/>
    <property type="evidence" value="ECO:0007669"/>
    <property type="project" value="UniProtKB-SubCell"/>
</dbReference>
<dbReference type="GO" id="GO:0005739">
    <property type="term" value="C:mitochondrion"/>
    <property type="evidence" value="ECO:0007669"/>
    <property type="project" value="GOC"/>
</dbReference>
<dbReference type="GO" id="GO:0045259">
    <property type="term" value="C:proton-transporting ATP synthase complex"/>
    <property type="evidence" value="ECO:0007669"/>
    <property type="project" value="UniProtKB-KW"/>
</dbReference>
<dbReference type="GO" id="GO:0005524">
    <property type="term" value="F:ATP binding"/>
    <property type="evidence" value="ECO:0007669"/>
    <property type="project" value="UniProtKB-UniRule"/>
</dbReference>
<dbReference type="GO" id="GO:0016887">
    <property type="term" value="F:ATP hydrolysis activity"/>
    <property type="evidence" value="ECO:0007669"/>
    <property type="project" value="InterPro"/>
</dbReference>
<dbReference type="GO" id="GO:0046933">
    <property type="term" value="F:proton-transporting ATP synthase activity, rotational mechanism"/>
    <property type="evidence" value="ECO:0007669"/>
    <property type="project" value="UniProtKB-UniRule"/>
</dbReference>
<dbReference type="GO" id="GO:0042776">
    <property type="term" value="P:proton motive force-driven mitochondrial ATP synthesis"/>
    <property type="evidence" value="ECO:0007669"/>
    <property type="project" value="TreeGrafter"/>
</dbReference>
<dbReference type="CDD" id="cd18110">
    <property type="entry name" value="ATP-synt_F1_beta_C"/>
    <property type="match status" value="1"/>
</dbReference>
<dbReference type="CDD" id="cd18115">
    <property type="entry name" value="ATP-synt_F1_beta_N"/>
    <property type="match status" value="1"/>
</dbReference>
<dbReference type="CDD" id="cd01133">
    <property type="entry name" value="F1-ATPase_beta_CD"/>
    <property type="match status" value="1"/>
</dbReference>
<dbReference type="FunFam" id="1.10.1140.10:FF:000001">
    <property type="entry name" value="ATP synthase subunit beta"/>
    <property type="match status" value="1"/>
</dbReference>
<dbReference type="FunFam" id="3.40.50.12240:FF:000006">
    <property type="entry name" value="ATP synthase subunit beta"/>
    <property type="match status" value="1"/>
</dbReference>
<dbReference type="FunFam" id="3.40.50.300:FF:000004">
    <property type="entry name" value="ATP synthase subunit beta"/>
    <property type="match status" value="1"/>
</dbReference>
<dbReference type="FunFam" id="2.40.10.170:FF:000002">
    <property type="entry name" value="ATP synthase subunit beta, chloroplastic"/>
    <property type="match status" value="1"/>
</dbReference>
<dbReference type="Gene3D" id="2.40.10.170">
    <property type="match status" value="1"/>
</dbReference>
<dbReference type="Gene3D" id="1.10.1140.10">
    <property type="entry name" value="Bovine Mitochondrial F1-atpase, Atp Synthase Beta Chain, Chain D, domain 3"/>
    <property type="match status" value="1"/>
</dbReference>
<dbReference type="Gene3D" id="3.40.50.300">
    <property type="entry name" value="P-loop containing nucleotide triphosphate hydrolases"/>
    <property type="match status" value="1"/>
</dbReference>
<dbReference type="HAMAP" id="MF_01347">
    <property type="entry name" value="ATP_synth_beta_bact"/>
    <property type="match status" value="1"/>
</dbReference>
<dbReference type="InterPro" id="IPR003593">
    <property type="entry name" value="AAA+_ATPase"/>
</dbReference>
<dbReference type="InterPro" id="IPR055190">
    <property type="entry name" value="ATP-synt_VA_C"/>
</dbReference>
<dbReference type="InterPro" id="IPR005722">
    <property type="entry name" value="ATP_synth_F1_bsu"/>
</dbReference>
<dbReference type="InterPro" id="IPR020003">
    <property type="entry name" value="ATPase_a/bsu_AS"/>
</dbReference>
<dbReference type="InterPro" id="IPR050053">
    <property type="entry name" value="ATPase_alpha/beta_chains"/>
</dbReference>
<dbReference type="InterPro" id="IPR004100">
    <property type="entry name" value="ATPase_F1/V1/A1_a/bsu_N"/>
</dbReference>
<dbReference type="InterPro" id="IPR036121">
    <property type="entry name" value="ATPase_F1/V1/A1_a/bsu_N_sf"/>
</dbReference>
<dbReference type="InterPro" id="IPR000194">
    <property type="entry name" value="ATPase_F1/V1/A1_a/bsu_nucl-bd"/>
</dbReference>
<dbReference type="InterPro" id="IPR024034">
    <property type="entry name" value="ATPase_F1/V1_b/a_C"/>
</dbReference>
<dbReference type="InterPro" id="IPR027417">
    <property type="entry name" value="P-loop_NTPase"/>
</dbReference>
<dbReference type="NCBIfam" id="TIGR01039">
    <property type="entry name" value="atpD"/>
    <property type="match status" value="1"/>
</dbReference>
<dbReference type="PANTHER" id="PTHR15184">
    <property type="entry name" value="ATP SYNTHASE"/>
    <property type="match status" value="1"/>
</dbReference>
<dbReference type="PANTHER" id="PTHR15184:SF71">
    <property type="entry name" value="ATP SYNTHASE SUBUNIT BETA, MITOCHONDRIAL"/>
    <property type="match status" value="1"/>
</dbReference>
<dbReference type="Pfam" id="PF00006">
    <property type="entry name" value="ATP-synt_ab"/>
    <property type="match status" value="1"/>
</dbReference>
<dbReference type="Pfam" id="PF02874">
    <property type="entry name" value="ATP-synt_ab_N"/>
    <property type="match status" value="1"/>
</dbReference>
<dbReference type="Pfam" id="PF22919">
    <property type="entry name" value="ATP-synt_VA_C"/>
    <property type="match status" value="1"/>
</dbReference>
<dbReference type="SMART" id="SM00382">
    <property type="entry name" value="AAA"/>
    <property type="match status" value="1"/>
</dbReference>
<dbReference type="SUPFAM" id="SSF47917">
    <property type="entry name" value="C-terminal domain of alpha and beta subunits of F1 ATP synthase"/>
    <property type="match status" value="1"/>
</dbReference>
<dbReference type="SUPFAM" id="SSF50615">
    <property type="entry name" value="N-terminal domain of alpha and beta subunits of F1 ATP synthase"/>
    <property type="match status" value="1"/>
</dbReference>
<dbReference type="SUPFAM" id="SSF52540">
    <property type="entry name" value="P-loop containing nucleoside triphosphate hydrolases"/>
    <property type="match status" value="1"/>
</dbReference>
<dbReference type="PROSITE" id="PS00152">
    <property type="entry name" value="ATPASE_ALPHA_BETA"/>
    <property type="match status" value="1"/>
</dbReference>
<comment type="function">
    <text evidence="1">Produces ATP from ADP in the presence of a proton gradient across the membrane. The catalytic sites are hosted primarily by the beta subunits.</text>
</comment>
<comment type="catalytic activity">
    <reaction evidence="1">
        <text>ATP + H2O + 4 H(+)(in) = ADP + phosphate + 5 H(+)(out)</text>
        <dbReference type="Rhea" id="RHEA:57720"/>
        <dbReference type="ChEBI" id="CHEBI:15377"/>
        <dbReference type="ChEBI" id="CHEBI:15378"/>
        <dbReference type="ChEBI" id="CHEBI:30616"/>
        <dbReference type="ChEBI" id="CHEBI:43474"/>
        <dbReference type="ChEBI" id="CHEBI:456216"/>
        <dbReference type="EC" id="7.1.2.2"/>
    </reaction>
</comment>
<comment type="subunit">
    <text evidence="1">F-type ATPases have 2 components, CF(1) - the catalytic core - and CF(0) - the membrane proton channel. CF(1) has five subunits: alpha(3), beta(3), gamma(1), delta(1), epsilon(1). CF(0) has four main subunits: a(1), b(1), b'(1) and c(9-12).</text>
</comment>
<comment type="subcellular location">
    <subcellularLocation>
        <location evidence="1">Plastid</location>
        <location evidence="1">Chloroplast thylakoid membrane</location>
        <topology evidence="1">Peripheral membrane protein</topology>
    </subcellularLocation>
</comment>
<comment type="similarity">
    <text evidence="1">Belongs to the ATPase alpha/beta chains family.</text>
</comment>
<accession>Q7HDI4</accession>
<evidence type="ECO:0000255" key="1">
    <source>
        <dbReference type="HAMAP-Rule" id="MF_01347"/>
    </source>
</evidence>
<sequence>MRTNPTTSSPVVSTLEEKNLGRIAQIIGPVLDVVFPPGKMPNIYNALVVKGRDTVGQQINVTCEVQQLLGNNRVRAVAMSATDGLMRGMEVIDTGAPLSVPVGGATLGRIFNVLGEPVDNLGPVDTRTTSPIHRSAPAFIQLDTKLSIFETGIKVVDLLAPYRRGGKIGLFGGAGVGKTVLIMELINNIAKAHGGVSVFGGVGERTREGNDLYMEMKESGVINEKNIAESKVALVYGQMNEPPGARMRVGLTALTMAEYFRDVNEQDVLLFIDNIFRFVQAGSEVSALLGRMPSAVGYQPTLSTEMGSLQERITSTKEGSITSIQAVYVPADDLTDPAPATTFAHLDATTVLSRVLAAKGIYPAVDPLDSTSTMLQPRIVGEEHYETAQRVKQTSQRYKELQDIIAILGLDELSEEDRLTVARARKIERFLSQPFFVAEVFTGSPGKYVGLAETIRGFQLILSGELDGLPEQAFYLVGNIDEATAKAMNLEVESKLKK</sequence>
<keyword id="KW-0066">ATP synthesis</keyword>
<keyword id="KW-0067">ATP-binding</keyword>
<keyword id="KW-0139">CF(1)</keyword>
<keyword id="KW-0150">Chloroplast</keyword>
<keyword id="KW-0375">Hydrogen ion transport</keyword>
<keyword id="KW-0406">Ion transport</keyword>
<keyword id="KW-0472">Membrane</keyword>
<keyword id="KW-0547">Nucleotide-binding</keyword>
<keyword id="KW-0934">Plastid</keyword>
<keyword id="KW-0793">Thylakoid</keyword>
<keyword id="KW-1278">Translocase</keyword>
<keyword id="KW-0813">Transport</keyword>
<protein>
    <recommendedName>
        <fullName evidence="1">ATP synthase subunit beta, chloroplastic</fullName>
        <ecNumber evidence="1">7.1.2.2</ecNumber>
    </recommendedName>
    <alternativeName>
        <fullName evidence="1">ATP synthase F1 sector subunit beta</fullName>
    </alternativeName>
    <alternativeName>
        <fullName evidence="1">F-ATPase subunit beta</fullName>
    </alternativeName>
</protein>
<organism>
    <name type="scientific">Acrocomia aculeata</name>
    <name type="common">Macaw palm</name>
    <name type="synonym">Cocos aculeata</name>
    <dbReference type="NCBI Taxonomy" id="169987"/>
    <lineage>
        <taxon>Eukaryota</taxon>
        <taxon>Viridiplantae</taxon>
        <taxon>Streptophyta</taxon>
        <taxon>Embryophyta</taxon>
        <taxon>Tracheophyta</taxon>
        <taxon>Spermatophyta</taxon>
        <taxon>Magnoliopsida</taxon>
        <taxon>Liliopsida</taxon>
        <taxon>Arecaceae</taxon>
        <taxon>Arecoideae</taxon>
        <taxon>Cocoseae</taxon>
        <taxon>Bactridinae</taxon>
        <taxon>Acrocomia</taxon>
    </lineage>
</organism>
<geneLocation type="chloroplast"/>
<feature type="chain" id="PRO_0000254439" description="ATP synthase subunit beta, chloroplastic">
    <location>
        <begin position="1"/>
        <end position="498"/>
    </location>
</feature>
<feature type="binding site" evidence="1">
    <location>
        <begin position="172"/>
        <end position="179"/>
    </location>
    <ligand>
        <name>ATP</name>
        <dbReference type="ChEBI" id="CHEBI:30616"/>
    </ligand>
</feature>
<gene>
    <name evidence="1" type="primary">atpB</name>
</gene>
<name>ATPB_ACRAL</name>
<proteinExistence type="inferred from homology"/>
<reference key="1">
    <citation type="journal article" date="2002" name="Mol. Phylogenet. Evol.">
        <title>A phylogenetic analysis of the Arecoid line of palms based on plastid DNA sequence data.</title>
        <authorList>
            <person name="Hahn W.J."/>
        </authorList>
    </citation>
    <scope>NUCLEOTIDE SEQUENCE [GENOMIC DNA]</scope>
</reference>